<organism>
    <name type="scientific">Saccharophagus degradans (strain 2-40 / ATCC 43961 / DSM 17024)</name>
    <dbReference type="NCBI Taxonomy" id="203122"/>
    <lineage>
        <taxon>Bacteria</taxon>
        <taxon>Pseudomonadati</taxon>
        <taxon>Pseudomonadota</taxon>
        <taxon>Gammaproteobacteria</taxon>
        <taxon>Cellvibrionales</taxon>
        <taxon>Cellvibrionaceae</taxon>
        <taxon>Saccharophagus</taxon>
    </lineage>
</organism>
<protein>
    <recommendedName>
        <fullName evidence="1">Leucine--tRNA ligase</fullName>
        <ecNumber evidence="1">6.1.1.4</ecNumber>
    </recommendedName>
    <alternativeName>
        <fullName evidence="1">Leucyl-tRNA synthetase</fullName>
        <shortName evidence="1">LeuRS</shortName>
    </alternativeName>
</protein>
<reference key="1">
    <citation type="journal article" date="2008" name="PLoS Genet.">
        <title>Complete genome sequence of the complex carbohydrate-degrading marine bacterium, Saccharophagus degradans strain 2-40 T.</title>
        <authorList>
            <person name="Weiner R.M."/>
            <person name="Taylor L.E. II"/>
            <person name="Henrissat B."/>
            <person name="Hauser L."/>
            <person name="Land M."/>
            <person name="Coutinho P.M."/>
            <person name="Rancurel C."/>
            <person name="Saunders E.H."/>
            <person name="Longmire A.G."/>
            <person name="Zhang H."/>
            <person name="Bayer E.A."/>
            <person name="Gilbert H.J."/>
            <person name="Larimer F."/>
            <person name="Zhulin I.B."/>
            <person name="Ekborg N.A."/>
            <person name="Lamed R."/>
            <person name="Richardson P.M."/>
            <person name="Borovok I."/>
            <person name="Hutcheson S."/>
        </authorList>
    </citation>
    <scope>NUCLEOTIDE SEQUENCE [LARGE SCALE GENOMIC DNA]</scope>
    <source>
        <strain>2-40 / ATCC 43961 / DSM 17024</strain>
    </source>
</reference>
<evidence type="ECO:0000255" key="1">
    <source>
        <dbReference type="HAMAP-Rule" id="MF_00049"/>
    </source>
</evidence>
<keyword id="KW-0030">Aminoacyl-tRNA synthetase</keyword>
<keyword id="KW-0067">ATP-binding</keyword>
<keyword id="KW-0963">Cytoplasm</keyword>
<keyword id="KW-0436">Ligase</keyword>
<keyword id="KW-0547">Nucleotide-binding</keyword>
<keyword id="KW-0648">Protein biosynthesis</keyword>
<keyword id="KW-1185">Reference proteome</keyword>
<feature type="chain" id="PRO_1000009421" description="Leucine--tRNA ligase">
    <location>
        <begin position="1"/>
        <end position="819"/>
    </location>
</feature>
<feature type="short sequence motif" description="'HIGH' region">
    <location>
        <begin position="42"/>
        <end position="52"/>
    </location>
</feature>
<feature type="short sequence motif" description="'KMSKS' region">
    <location>
        <begin position="577"/>
        <end position="581"/>
    </location>
</feature>
<feature type="binding site" evidence="1">
    <location>
        <position position="580"/>
    </location>
    <ligand>
        <name>ATP</name>
        <dbReference type="ChEBI" id="CHEBI:30616"/>
    </ligand>
</feature>
<dbReference type="EC" id="6.1.1.4" evidence="1"/>
<dbReference type="EMBL" id="CP000282">
    <property type="protein sequence ID" value="ABD82563.1"/>
    <property type="molecule type" value="Genomic_DNA"/>
</dbReference>
<dbReference type="RefSeq" id="WP_011469779.1">
    <property type="nucleotide sequence ID" value="NC_007912.1"/>
</dbReference>
<dbReference type="SMR" id="Q21FG6"/>
<dbReference type="STRING" id="203122.Sde_3308"/>
<dbReference type="GeneID" id="98614929"/>
<dbReference type="KEGG" id="sde:Sde_3308"/>
<dbReference type="eggNOG" id="COG0495">
    <property type="taxonomic scope" value="Bacteria"/>
</dbReference>
<dbReference type="HOGENOM" id="CLU_004427_0_0_6"/>
<dbReference type="OrthoDB" id="9810365at2"/>
<dbReference type="Proteomes" id="UP000001947">
    <property type="component" value="Chromosome"/>
</dbReference>
<dbReference type="GO" id="GO:0005829">
    <property type="term" value="C:cytosol"/>
    <property type="evidence" value="ECO:0007669"/>
    <property type="project" value="TreeGrafter"/>
</dbReference>
<dbReference type="GO" id="GO:0002161">
    <property type="term" value="F:aminoacyl-tRNA deacylase activity"/>
    <property type="evidence" value="ECO:0007669"/>
    <property type="project" value="InterPro"/>
</dbReference>
<dbReference type="GO" id="GO:0005524">
    <property type="term" value="F:ATP binding"/>
    <property type="evidence" value="ECO:0007669"/>
    <property type="project" value="UniProtKB-UniRule"/>
</dbReference>
<dbReference type="GO" id="GO:0004823">
    <property type="term" value="F:leucine-tRNA ligase activity"/>
    <property type="evidence" value="ECO:0007669"/>
    <property type="project" value="UniProtKB-UniRule"/>
</dbReference>
<dbReference type="GO" id="GO:0006429">
    <property type="term" value="P:leucyl-tRNA aminoacylation"/>
    <property type="evidence" value="ECO:0007669"/>
    <property type="project" value="UniProtKB-UniRule"/>
</dbReference>
<dbReference type="CDD" id="cd07958">
    <property type="entry name" value="Anticodon_Ia_Leu_BEm"/>
    <property type="match status" value="1"/>
</dbReference>
<dbReference type="CDD" id="cd00812">
    <property type="entry name" value="LeuRS_core"/>
    <property type="match status" value="1"/>
</dbReference>
<dbReference type="FunFam" id="3.10.20.590:FF:000001">
    <property type="entry name" value="Leucine--tRNA ligase"/>
    <property type="match status" value="1"/>
</dbReference>
<dbReference type="FunFam" id="3.40.50.620:FF:000003">
    <property type="entry name" value="Leucine--tRNA ligase"/>
    <property type="match status" value="1"/>
</dbReference>
<dbReference type="FunFam" id="3.40.50.620:FF:000124">
    <property type="entry name" value="Leucine--tRNA ligase"/>
    <property type="match status" value="1"/>
</dbReference>
<dbReference type="FunFam" id="3.90.740.10:FF:000012">
    <property type="entry name" value="Leucine--tRNA ligase"/>
    <property type="match status" value="1"/>
</dbReference>
<dbReference type="FunFam" id="1.10.730.10:FF:000011">
    <property type="entry name" value="Leucine--tRNA ligase chloroplastic/mitochondrial"/>
    <property type="match status" value="1"/>
</dbReference>
<dbReference type="Gene3D" id="3.10.20.590">
    <property type="match status" value="1"/>
</dbReference>
<dbReference type="Gene3D" id="3.40.50.620">
    <property type="entry name" value="HUPs"/>
    <property type="match status" value="2"/>
</dbReference>
<dbReference type="Gene3D" id="1.10.730.10">
    <property type="entry name" value="Isoleucyl-tRNA Synthetase, Domain 1"/>
    <property type="match status" value="2"/>
</dbReference>
<dbReference type="HAMAP" id="MF_00049_B">
    <property type="entry name" value="Leu_tRNA_synth_B"/>
    <property type="match status" value="1"/>
</dbReference>
<dbReference type="InterPro" id="IPR001412">
    <property type="entry name" value="aa-tRNA-synth_I_CS"/>
</dbReference>
<dbReference type="InterPro" id="IPR002300">
    <property type="entry name" value="aa-tRNA-synth_Ia"/>
</dbReference>
<dbReference type="InterPro" id="IPR002302">
    <property type="entry name" value="Leu-tRNA-ligase"/>
</dbReference>
<dbReference type="InterPro" id="IPR025709">
    <property type="entry name" value="Leu_tRNA-synth_edit"/>
</dbReference>
<dbReference type="InterPro" id="IPR013155">
    <property type="entry name" value="M/V/L/I-tRNA-synth_anticd-bd"/>
</dbReference>
<dbReference type="InterPro" id="IPR015413">
    <property type="entry name" value="Methionyl/Leucyl_tRNA_Synth"/>
</dbReference>
<dbReference type="InterPro" id="IPR014729">
    <property type="entry name" value="Rossmann-like_a/b/a_fold"/>
</dbReference>
<dbReference type="InterPro" id="IPR009080">
    <property type="entry name" value="tRNAsynth_Ia_anticodon-bd"/>
</dbReference>
<dbReference type="InterPro" id="IPR009008">
    <property type="entry name" value="Val/Leu/Ile-tRNA-synth_edit"/>
</dbReference>
<dbReference type="NCBIfam" id="TIGR00396">
    <property type="entry name" value="leuS_bact"/>
    <property type="match status" value="1"/>
</dbReference>
<dbReference type="PANTHER" id="PTHR43740:SF2">
    <property type="entry name" value="LEUCINE--TRNA LIGASE, MITOCHONDRIAL"/>
    <property type="match status" value="1"/>
</dbReference>
<dbReference type="PANTHER" id="PTHR43740">
    <property type="entry name" value="LEUCYL-TRNA SYNTHETASE"/>
    <property type="match status" value="1"/>
</dbReference>
<dbReference type="Pfam" id="PF08264">
    <property type="entry name" value="Anticodon_1"/>
    <property type="match status" value="1"/>
</dbReference>
<dbReference type="Pfam" id="PF00133">
    <property type="entry name" value="tRNA-synt_1"/>
    <property type="match status" value="1"/>
</dbReference>
<dbReference type="Pfam" id="PF13603">
    <property type="entry name" value="tRNA-synt_1_2"/>
    <property type="match status" value="1"/>
</dbReference>
<dbReference type="Pfam" id="PF09334">
    <property type="entry name" value="tRNA-synt_1g"/>
    <property type="match status" value="1"/>
</dbReference>
<dbReference type="PRINTS" id="PR00985">
    <property type="entry name" value="TRNASYNTHLEU"/>
</dbReference>
<dbReference type="SUPFAM" id="SSF47323">
    <property type="entry name" value="Anticodon-binding domain of a subclass of class I aminoacyl-tRNA synthetases"/>
    <property type="match status" value="1"/>
</dbReference>
<dbReference type="SUPFAM" id="SSF52374">
    <property type="entry name" value="Nucleotidylyl transferase"/>
    <property type="match status" value="1"/>
</dbReference>
<dbReference type="SUPFAM" id="SSF50677">
    <property type="entry name" value="ValRS/IleRS/LeuRS editing domain"/>
    <property type="match status" value="1"/>
</dbReference>
<dbReference type="PROSITE" id="PS00178">
    <property type="entry name" value="AA_TRNA_LIGASE_I"/>
    <property type="match status" value="1"/>
</dbReference>
<accession>Q21FG6</accession>
<name>SYL_SACD2</name>
<sequence>MNEYYQPSEIEAQAQKYWEENKSFNVTEDPTKEKFYCLAMFPYPSGRLHMGHVRNYTISDVISRFHRMQGKNVLHPMGWDAFGLPAENAAIKNNTAPAKWTYSNTDYMRKQLTELGFGFDWSREVTTCKPDYYKWEQWFFTRLYEKGLAYKKVASVNWCPNDQTVLANEQVVDGQCWRCDTAVERKEIPQWFIRITDYAEELLADLDKLPNWPEQVKTMQRNWIGKSQGVEMRFDLANPIAGTTGFDVYTTRPDTLMGVTYVSLAAEHPIAKALAETNPALAAFIQECKVQSVAEADMANMEKKGIDTGIKAKHPITGDEVSVWVANYVLMDYGSGAVMAVPAHDQRDWEFAKKYDLEIKQVIAPEDGSDIDLTKEAFVDKGVLVNSGEYDGLNFNAAFEAISQTLQAANKGKVTTNFRLRDWGVSRQRYWGSPIPIFNLPDGGVIPVPADRLPVLLPEDVQMDGVQSPIKADKEWCKAELNGQAVEHETDTFDTFMESSWYYARYTSPNADSMLDPDKANYWLPVDQYVGGIEHAILHLLYARFFHKLMRDEGLVECDEPFERLLCQGMVLKDGTKMSKSKGNTVDPEDLIKTYGADTVRLFSMFAAPPEQSLEWTDSGVEGAFRFLKKLWKAVASHLEAGSAGEIDANSLDEQQKALRRKTHETISKVSDDYGRRQTFNTAIAAVMELLNEITRSADRSTPNGLAVEREALEAATLLLAPIVPHACHALWQAFGNEVAVLDAPWPTVDEAALVKDTITIVAQVNGKVRAKLDAPANADKDALEKIALADESVLKHIDGKMIRKVIVVPGKLVNIVAN</sequence>
<gene>
    <name evidence="1" type="primary">leuS</name>
    <name type="ordered locus">Sde_3308</name>
</gene>
<comment type="catalytic activity">
    <reaction evidence="1">
        <text>tRNA(Leu) + L-leucine + ATP = L-leucyl-tRNA(Leu) + AMP + diphosphate</text>
        <dbReference type="Rhea" id="RHEA:11688"/>
        <dbReference type="Rhea" id="RHEA-COMP:9613"/>
        <dbReference type="Rhea" id="RHEA-COMP:9622"/>
        <dbReference type="ChEBI" id="CHEBI:30616"/>
        <dbReference type="ChEBI" id="CHEBI:33019"/>
        <dbReference type="ChEBI" id="CHEBI:57427"/>
        <dbReference type="ChEBI" id="CHEBI:78442"/>
        <dbReference type="ChEBI" id="CHEBI:78494"/>
        <dbReference type="ChEBI" id="CHEBI:456215"/>
        <dbReference type="EC" id="6.1.1.4"/>
    </reaction>
</comment>
<comment type="subcellular location">
    <subcellularLocation>
        <location evidence="1">Cytoplasm</location>
    </subcellularLocation>
</comment>
<comment type="similarity">
    <text evidence="1">Belongs to the class-I aminoacyl-tRNA synthetase family.</text>
</comment>
<proteinExistence type="inferred from homology"/>